<keyword id="KW-0548">Nucleotidyltransferase</keyword>
<keyword id="KW-0808">Transferase</keyword>
<gene>
    <name evidence="1" type="primary">citX</name>
    <name type="ordered locus">SpyM50889</name>
</gene>
<feature type="chain" id="PRO_1000049606" description="Probable apo-citrate lyase phosphoribosyl-dephospho-CoA transferase">
    <location>
        <begin position="1"/>
        <end position="192"/>
    </location>
</feature>
<sequence length="192" mass="21602">MSKEAYFSGESIQLSDMLRAREERALRQLHLLKEYPEGSLLSVTMNIPGPIKTSPKLLEAFDIVIKAIQTALADDKICYQLRLLPTTGYEYYLITSLPSRDLKLKMIALETELPIGRLMDLDVLVLQNDLPHSISRTVLGGSPRQCFICSKEAKVCGRLRKHSVEEMQTAISKLLHSFFNKDNQSSSSDKTG</sequence>
<evidence type="ECO:0000255" key="1">
    <source>
        <dbReference type="HAMAP-Rule" id="MF_00398"/>
    </source>
</evidence>
<protein>
    <recommendedName>
        <fullName evidence="1">Probable apo-citrate lyase phosphoribosyl-dephospho-CoA transferase</fullName>
        <ecNumber evidence="1">2.7.7.61</ecNumber>
    </recommendedName>
    <alternativeName>
        <fullName evidence="1">Apo-ACP nucleodityltransferase</fullName>
    </alternativeName>
    <alternativeName>
        <fullName evidence="1">Holo-ACP synthase</fullName>
    </alternativeName>
    <alternativeName>
        <fullName evidence="1">Holo-citrate lyase synthase</fullName>
    </alternativeName>
</protein>
<organism>
    <name type="scientific">Streptococcus pyogenes serotype M5 (strain Manfredo)</name>
    <dbReference type="NCBI Taxonomy" id="160491"/>
    <lineage>
        <taxon>Bacteria</taxon>
        <taxon>Bacillati</taxon>
        <taxon>Bacillota</taxon>
        <taxon>Bacilli</taxon>
        <taxon>Lactobacillales</taxon>
        <taxon>Streptococcaceae</taxon>
        <taxon>Streptococcus</taxon>
    </lineage>
</organism>
<comment type="function">
    <text evidence="1">Transfers 2-(5''-triphosphoribosyl)-3'-dephosphocoenzyme-A on a serine residue to the apo-acyl carrier protein (gamma chain) of the citrate lyase to yield holo-acyl carrier protein.</text>
</comment>
<comment type="catalytic activity">
    <reaction evidence="1">
        <text>apo-[citrate lyase ACP] + 2'-(5''-triphospho-alpha-D-ribosyl)-3'-dephospho-CoA = holo-[citrate lyase ACP] + diphosphate</text>
        <dbReference type="Rhea" id="RHEA:16333"/>
        <dbReference type="Rhea" id="RHEA-COMP:10157"/>
        <dbReference type="Rhea" id="RHEA-COMP:10158"/>
        <dbReference type="ChEBI" id="CHEBI:29999"/>
        <dbReference type="ChEBI" id="CHEBI:33019"/>
        <dbReference type="ChEBI" id="CHEBI:61378"/>
        <dbReference type="ChEBI" id="CHEBI:82683"/>
        <dbReference type="EC" id="2.7.7.61"/>
    </reaction>
</comment>
<comment type="similarity">
    <text evidence="1">Belongs to the CitX family.</text>
</comment>
<accession>A2REE2</accession>
<proteinExistence type="inferred from homology"/>
<name>CITX_STRPG</name>
<reference key="1">
    <citation type="journal article" date="2007" name="J. Bacteriol.">
        <title>Complete genome of acute rheumatic fever-associated serotype M5 Streptococcus pyogenes strain Manfredo.</title>
        <authorList>
            <person name="Holden M.T.G."/>
            <person name="Scott A."/>
            <person name="Cherevach I."/>
            <person name="Chillingworth T."/>
            <person name="Churcher C."/>
            <person name="Cronin A."/>
            <person name="Dowd L."/>
            <person name="Feltwell T."/>
            <person name="Hamlin N."/>
            <person name="Holroyd S."/>
            <person name="Jagels K."/>
            <person name="Moule S."/>
            <person name="Mungall K."/>
            <person name="Quail M.A."/>
            <person name="Price C."/>
            <person name="Rabbinowitsch E."/>
            <person name="Sharp S."/>
            <person name="Skelton J."/>
            <person name="Whitehead S."/>
            <person name="Barrell B.G."/>
            <person name="Kehoe M."/>
            <person name="Parkhill J."/>
        </authorList>
    </citation>
    <scope>NUCLEOTIDE SEQUENCE [LARGE SCALE GENOMIC DNA]</scope>
    <source>
        <strain>Manfredo</strain>
    </source>
</reference>
<dbReference type="EC" id="2.7.7.61" evidence="1"/>
<dbReference type="EMBL" id="AM295007">
    <property type="protein sequence ID" value="CAM30217.1"/>
    <property type="molecule type" value="Genomic_DNA"/>
</dbReference>
<dbReference type="RefSeq" id="WP_011888860.1">
    <property type="nucleotide sequence ID" value="NC_009332.1"/>
</dbReference>
<dbReference type="SMR" id="A2REE2"/>
<dbReference type="KEGG" id="spf:SpyM50889"/>
<dbReference type="HOGENOM" id="CLU_104529_1_0_9"/>
<dbReference type="GO" id="GO:0050519">
    <property type="term" value="F:holo-citrate lyase synthase activity"/>
    <property type="evidence" value="ECO:0007669"/>
    <property type="project" value="UniProtKB-UniRule"/>
</dbReference>
<dbReference type="GO" id="GO:0051191">
    <property type="term" value="P:prosthetic group biosynthetic process"/>
    <property type="evidence" value="ECO:0007669"/>
    <property type="project" value="InterPro"/>
</dbReference>
<dbReference type="HAMAP" id="MF_00398">
    <property type="entry name" value="CitX"/>
    <property type="match status" value="1"/>
</dbReference>
<dbReference type="InterPro" id="IPR005551">
    <property type="entry name" value="CitX"/>
</dbReference>
<dbReference type="NCBIfam" id="TIGR03124">
    <property type="entry name" value="citrate_citX"/>
    <property type="match status" value="1"/>
</dbReference>
<dbReference type="NCBIfam" id="NF002383">
    <property type="entry name" value="PRK01392.1"/>
    <property type="match status" value="1"/>
</dbReference>
<dbReference type="Pfam" id="PF03802">
    <property type="entry name" value="CitX"/>
    <property type="match status" value="1"/>
</dbReference>